<evidence type="ECO:0000255" key="1">
    <source>
        <dbReference type="HAMAP-Rule" id="MF_00379"/>
    </source>
</evidence>
<keyword id="KW-0963">Cytoplasm</keyword>
<keyword id="KW-0342">GTP-binding</keyword>
<keyword id="KW-0378">Hydrolase</keyword>
<keyword id="KW-0460">Magnesium</keyword>
<keyword id="KW-0479">Metal-binding</keyword>
<keyword id="KW-0547">Nucleotide-binding</keyword>
<keyword id="KW-0630">Potassium</keyword>
<keyword id="KW-0819">tRNA processing</keyword>
<comment type="function">
    <text evidence="1">Exhibits a very high intrinsic GTPase hydrolysis rate. Involved in the addition of a carboxymethylaminomethyl (cmnm) group at the wobble position (U34) of certain tRNAs, forming tRNA-cmnm(5)s(2)U34.</text>
</comment>
<comment type="cofactor">
    <cofactor evidence="1">
        <name>K(+)</name>
        <dbReference type="ChEBI" id="CHEBI:29103"/>
    </cofactor>
    <text evidence="1">Binds 1 potassium ion per subunit.</text>
</comment>
<comment type="subunit">
    <text evidence="1">Homodimer. Heterotetramer of two MnmE and two MnmG subunits.</text>
</comment>
<comment type="subcellular location">
    <subcellularLocation>
        <location evidence="1">Cytoplasm</location>
    </subcellularLocation>
</comment>
<comment type="similarity">
    <text evidence="1">Belongs to the TRAFAC class TrmE-Era-EngA-EngB-Septin-like GTPase superfamily. TrmE GTPase family.</text>
</comment>
<proteinExistence type="inferred from homology"/>
<organism>
    <name type="scientific">Anaplasma phagocytophilum (strain HZ)</name>
    <dbReference type="NCBI Taxonomy" id="212042"/>
    <lineage>
        <taxon>Bacteria</taxon>
        <taxon>Pseudomonadati</taxon>
        <taxon>Pseudomonadota</taxon>
        <taxon>Alphaproteobacteria</taxon>
        <taxon>Rickettsiales</taxon>
        <taxon>Anaplasmataceae</taxon>
        <taxon>Anaplasma</taxon>
        <taxon>phagocytophilum group</taxon>
    </lineage>
</organism>
<sequence>MVKRQTDTIFALSTAQGKSGVAVIRISGPSSMEALRLLGVKDDISPRVAHCRLLHDSKGRLIDQAVVLYFPKPGSFTGEDVVELQVHGSRAVIRLLYEELQTFIRIAEPGEFSLRAYLNGKIDLTRAEGIADLINAETDAQLRQALAQSTGKLEKQYDQWRSILLDILTDLEACIDFPEDVDSSCVLGGIYNNIEKLCAVLGQYLNDGHRGERLRSGVRVVILGPPNAGKSTLFNSIARRNAAIVSEHPGTTRDVLEVAIDIGGYPYIVLDTAGIRESCDGIEQEGIKRAKMAAEEADIKIVMYPYETTSMQGIDPICDLQDEKTILVLSKADNVDLPESKCIDGKEFHLISVHQDRGIGKLLTLIQEKSRDSFPQEGDVFITSQRHRSHLQKALQVVDAVSKVMPIEIVAEHLRIAAYELGRVTGAVSGDDILDDIFSKFCIGK</sequence>
<dbReference type="EC" id="3.6.-.-" evidence="1"/>
<dbReference type="EMBL" id="CP000235">
    <property type="protein sequence ID" value="ABD43605.1"/>
    <property type="molecule type" value="Genomic_DNA"/>
</dbReference>
<dbReference type="RefSeq" id="WP_011451310.1">
    <property type="nucleotide sequence ID" value="NC_007797.1"/>
</dbReference>
<dbReference type="SMR" id="Q2GIJ8"/>
<dbReference type="STRING" id="212042.APH_1288"/>
<dbReference type="PaxDb" id="212042-APH_1288"/>
<dbReference type="EnsemblBacteria" id="ABD43605">
    <property type="protein sequence ID" value="ABD43605"/>
    <property type="gene ID" value="APH_1288"/>
</dbReference>
<dbReference type="KEGG" id="aph:APH_1288"/>
<dbReference type="eggNOG" id="COG0486">
    <property type="taxonomic scope" value="Bacteria"/>
</dbReference>
<dbReference type="HOGENOM" id="CLU_019624_3_1_5"/>
<dbReference type="Proteomes" id="UP000001943">
    <property type="component" value="Chromosome"/>
</dbReference>
<dbReference type="GO" id="GO:0005737">
    <property type="term" value="C:cytoplasm"/>
    <property type="evidence" value="ECO:0007669"/>
    <property type="project" value="UniProtKB-SubCell"/>
</dbReference>
<dbReference type="GO" id="GO:0005525">
    <property type="term" value="F:GTP binding"/>
    <property type="evidence" value="ECO:0007669"/>
    <property type="project" value="UniProtKB-UniRule"/>
</dbReference>
<dbReference type="GO" id="GO:0003924">
    <property type="term" value="F:GTPase activity"/>
    <property type="evidence" value="ECO:0007669"/>
    <property type="project" value="UniProtKB-UniRule"/>
</dbReference>
<dbReference type="GO" id="GO:0046872">
    <property type="term" value="F:metal ion binding"/>
    <property type="evidence" value="ECO:0007669"/>
    <property type="project" value="UniProtKB-KW"/>
</dbReference>
<dbReference type="GO" id="GO:0030488">
    <property type="term" value="P:tRNA methylation"/>
    <property type="evidence" value="ECO:0007669"/>
    <property type="project" value="TreeGrafter"/>
</dbReference>
<dbReference type="GO" id="GO:0002098">
    <property type="term" value="P:tRNA wobble uridine modification"/>
    <property type="evidence" value="ECO:0007669"/>
    <property type="project" value="TreeGrafter"/>
</dbReference>
<dbReference type="CDD" id="cd04164">
    <property type="entry name" value="trmE"/>
    <property type="match status" value="1"/>
</dbReference>
<dbReference type="CDD" id="cd14858">
    <property type="entry name" value="TrmE_N"/>
    <property type="match status" value="1"/>
</dbReference>
<dbReference type="FunFam" id="3.30.1360.120:FF:000007">
    <property type="entry name" value="tRNA modification GTPase GTPBP3, mitochondrial"/>
    <property type="match status" value="1"/>
</dbReference>
<dbReference type="Gene3D" id="3.40.50.300">
    <property type="entry name" value="P-loop containing nucleotide triphosphate hydrolases"/>
    <property type="match status" value="1"/>
</dbReference>
<dbReference type="Gene3D" id="3.30.1360.120">
    <property type="entry name" value="Probable tRNA modification gtpase trme, domain 1"/>
    <property type="match status" value="1"/>
</dbReference>
<dbReference type="Gene3D" id="1.20.120.430">
    <property type="entry name" value="tRNA modification GTPase MnmE domain 2"/>
    <property type="match status" value="1"/>
</dbReference>
<dbReference type="HAMAP" id="MF_00379">
    <property type="entry name" value="GTPase_MnmE"/>
    <property type="match status" value="1"/>
</dbReference>
<dbReference type="InterPro" id="IPR031168">
    <property type="entry name" value="G_TrmE"/>
</dbReference>
<dbReference type="InterPro" id="IPR006073">
    <property type="entry name" value="GTP-bd"/>
</dbReference>
<dbReference type="InterPro" id="IPR018948">
    <property type="entry name" value="GTP-bd_TrmE_N"/>
</dbReference>
<dbReference type="InterPro" id="IPR004520">
    <property type="entry name" value="GTPase_MnmE"/>
</dbReference>
<dbReference type="InterPro" id="IPR027368">
    <property type="entry name" value="MnmE_dom2"/>
</dbReference>
<dbReference type="InterPro" id="IPR025867">
    <property type="entry name" value="MnmE_helical"/>
</dbReference>
<dbReference type="InterPro" id="IPR027417">
    <property type="entry name" value="P-loop_NTPase"/>
</dbReference>
<dbReference type="InterPro" id="IPR005225">
    <property type="entry name" value="Small_GTP-bd"/>
</dbReference>
<dbReference type="InterPro" id="IPR027266">
    <property type="entry name" value="TrmE/GcvT_dom1"/>
</dbReference>
<dbReference type="NCBIfam" id="TIGR00450">
    <property type="entry name" value="mnmE_trmE_thdF"/>
    <property type="match status" value="1"/>
</dbReference>
<dbReference type="NCBIfam" id="NF003661">
    <property type="entry name" value="PRK05291.1-3"/>
    <property type="match status" value="1"/>
</dbReference>
<dbReference type="NCBIfam" id="TIGR00231">
    <property type="entry name" value="small_GTP"/>
    <property type="match status" value="1"/>
</dbReference>
<dbReference type="PANTHER" id="PTHR42714">
    <property type="entry name" value="TRNA MODIFICATION GTPASE GTPBP3"/>
    <property type="match status" value="1"/>
</dbReference>
<dbReference type="PANTHER" id="PTHR42714:SF2">
    <property type="entry name" value="TRNA MODIFICATION GTPASE GTPBP3, MITOCHONDRIAL"/>
    <property type="match status" value="1"/>
</dbReference>
<dbReference type="Pfam" id="PF01926">
    <property type="entry name" value="MMR_HSR1"/>
    <property type="match status" value="1"/>
</dbReference>
<dbReference type="Pfam" id="PF12631">
    <property type="entry name" value="MnmE_helical"/>
    <property type="match status" value="1"/>
</dbReference>
<dbReference type="Pfam" id="PF10396">
    <property type="entry name" value="TrmE_N"/>
    <property type="match status" value="1"/>
</dbReference>
<dbReference type="SUPFAM" id="SSF52540">
    <property type="entry name" value="P-loop containing nucleoside triphosphate hydrolases"/>
    <property type="match status" value="1"/>
</dbReference>
<dbReference type="SUPFAM" id="SSF116878">
    <property type="entry name" value="TrmE connector domain"/>
    <property type="match status" value="1"/>
</dbReference>
<dbReference type="PROSITE" id="PS51709">
    <property type="entry name" value="G_TRME"/>
    <property type="match status" value="1"/>
</dbReference>
<gene>
    <name evidence="1" type="primary">mnmE</name>
    <name evidence="1" type="synonym">trmE</name>
    <name type="ordered locus">APH_1288</name>
</gene>
<accession>Q2GIJ8</accession>
<reference key="1">
    <citation type="journal article" date="2006" name="PLoS Genet.">
        <title>Comparative genomics of emerging human ehrlichiosis agents.</title>
        <authorList>
            <person name="Dunning Hotopp J.C."/>
            <person name="Lin M."/>
            <person name="Madupu R."/>
            <person name="Crabtree J."/>
            <person name="Angiuoli S.V."/>
            <person name="Eisen J.A."/>
            <person name="Seshadri R."/>
            <person name="Ren Q."/>
            <person name="Wu M."/>
            <person name="Utterback T.R."/>
            <person name="Smith S."/>
            <person name="Lewis M."/>
            <person name="Khouri H."/>
            <person name="Zhang C."/>
            <person name="Niu H."/>
            <person name="Lin Q."/>
            <person name="Ohashi N."/>
            <person name="Zhi N."/>
            <person name="Nelson W.C."/>
            <person name="Brinkac L.M."/>
            <person name="Dodson R.J."/>
            <person name="Rosovitz M.J."/>
            <person name="Sundaram J.P."/>
            <person name="Daugherty S.C."/>
            <person name="Davidsen T."/>
            <person name="Durkin A.S."/>
            <person name="Gwinn M.L."/>
            <person name="Haft D.H."/>
            <person name="Selengut J.D."/>
            <person name="Sullivan S.A."/>
            <person name="Zafar N."/>
            <person name="Zhou L."/>
            <person name="Benahmed F."/>
            <person name="Forberger H."/>
            <person name="Halpin R."/>
            <person name="Mulligan S."/>
            <person name="Robinson J."/>
            <person name="White O."/>
            <person name="Rikihisa Y."/>
            <person name="Tettelin H."/>
        </authorList>
    </citation>
    <scope>NUCLEOTIDE SEQUENCE [LARGE SCALE GENOMIC DNA]</scope>
    <source>
        <strain>HZ</strain>
    </source>
</reference>
<feature type="chain" id="PRO_0000345706" description="tRNA modification GTPase MnmE">
    <location>
        <begin position="1"/>
        <end position="445"/>
    </location>
</feature>
<feature type="domain" description="TrmE-type G">
    <location>
        <begin position="217"/>
        <end position="371"/>
    </location>
</feature>
<feature type="binding site" evidence="1">
    <location>
        <position position="25"/>
    </location>
    <ligand>
        <name>(6S)-5-formyl-5,6,7,8-tetrahydrofolate</name>
        <dbReference type="ChEBI" id="CHEBI:57457"/>
    </ligand>
</feature>
<feature type="binding site" evidence="1">
    <location>
        <position position="83"/>
    </location>
    <ligand>
        <name>(6S)-5-formyl-5,6,7,8-tetrahydrofolate</name>
        <dbReference type="ChEBI" id="CHEBI:57457"/>
    </ligand>
</feature>
<feature type="binding site" evidence="1">
    <location>
        <position position="121"/>
    </location>
    <ligand>
        <name>(6S)-5-formyl-5,6,7,8-tetrahydrofolate</name>
        <dbReference type="ChEBI" id="CHEBI:57457"/>
    </ligand>
</feature>
<feature type="binding site" evidence="1">
    <location>
        <begin position="227"/>
        <end position="232"/>
    </location>
    <ligand>
        <name>GTP</name>
        <dbReference type="ChEBI" id="CHEBI:37565"/>
    </ligand>
</feature>
<feature type="binding site" evidence="1">
    <location>
        <position position="231"/>
    </location>
    <ligand>
        <name>Mg(2+)</name>
        <dbReference type="ChEBI" id="CHEBI:18420"/>
    </ligand>
</feature>
<feature type="binding site" evidence="1">
    <location>
        <begin position="246"/>
        <end position="252"/>
    </location>
    <ligand>
        <name>GTP</name>
        <dbReference type="ChEBI" id="CHEBI:37565"/>
    </ligand>
</feature>
<feature type="binding site" evidence="1">
    <location>
        <position position="252"/>
    </location>
    <ligand>
        <name>Mg(2+)</name>
        <dbReference type="ChEBI" id="CHEBI:18420"/>
    </ligand>
</feature>
<feature type="binding site" evidence="1">
    <location>
        <begin position="271"/>
        <end position="274"/>
    </location>
    <ligand>
        <name>GTP</name>
        <dbReference type="ChEBI" id="CHEBI:37565"/>
    </ligand>
</feature>
<feature type="binding site" evidence="1">
    <location>
        <position position="445"/>
    </location>
    <ligand>
        <name>(6S)-5-formyl-5,6,7,8-tetrahydrofolate</name>
        <dbReference type="ChEBI" id="CHEBI:57457"/>
    </ligand>
</feature>
<protein>
    <recommendedName>
        <fullName evidence="1">tRNA modification GTPase MnmE</fullName>
        <ecNumber evidence="1">3.6.-.-</ecNumber>
    </recommendedName>
</protein>
<name>MNME_ANAPZ</name>